<proteinExistence type="inferred from homology"/>
<feature type="chain" id="PRO_0000348702" description="tRNA-cytidine(32) 2-sulfurtransferase">
    <location>
        <begin position="1"/>
        <end position="314"/>
    </location>
</feature>
<feature type="short sequence motif" description="PP-loop motif" evidence="1">
    <location>
        <begin position="53"/>
        <end position="58"/>
    </location>
</feature>
<feature type="binding site" evidence="1">
    <location>
        <position position="128"/>
    </location>
    <ligand>
        <name>[4Fe-4S] cluster</name>
        <dbReference type="ChEBI" id="CHEBI:49883"/>
    </ligand>
</feature>
<feature type="binding site" evidence="1">
    <location>
        <position position="131"/>
    </location>
    <ligand>
        <name>[4Fe-4S] cluster</name>
        <dbReference type="ChEBI" id="CHEBI:49883"/>
    </ligand>
</feature>
<feature type="binding site" evidence="1">
    <location>
        <position position="219"/>
    </location>
    <ligand>
        <name>[4Fe-4S] cluster</name>
        <dbReference type="ChEBI" id="CHEBI:49883"/>
    </ligand>
</feature>
<name>TTCA_COLP3</name>
<organism>
    <name type="scientific">Colwellia psychrerythraea (strain 34H / ATCC BAA-681)</name>
    <name type="common">Vibrio psychroerythus</name>
    <dbReference type="NCBI Taxonomy" id="167879"/>
    <lineage>
        <taxon>Bacteria</taxon>
        <taxon>Pseudomonadati</taxon>
        <taxon>Pseudomonadota</taxon>
        <taxon>Gammaproteobacteria</taxon>
        <taxon>Alteromonadales</taxon>
        <taxon>Colwelliaceae</taxon>
        <taxon>Colwellia</taxon>
    </lineage>
</organism>
<gene>
    <name evidence="1" type="primary">ttcA</name>
    <name type="ordered locus">CPS_2974</name>
</gene>
<keyword id="KW-0004">4Fe-4S</keyword>
<keyword id="KW-0067">ATP-binding</keyword>
<keyword id="KW-0963">Cytoplasm</keyword>
<keyword id="KW-0408">Iron</keyword>
<keyword id="KW-0411">Iron-sulfur</keyword>
<keyword id="KW-0460">Magnesium</keyword>
<keyword id="KW-0479">Metal-binding</keyword>
<keyword id="KW-0547">Nucleotide-binding</keyword>
<keyword id="KW-0694">RNA-binding</keyword>
<keyword id="KW-0808">Transferase</keyword>
<keyword id="KW-0819">tRNA processing</keyword>
<keyword id="KW-0820">tRNA-binding</keyword>
<accession>Q47ZU5</accession>
<protein>
    <recommendedName>
        <fullName evidence="1">tRNA-cytidine(32) 2-sulfurtransferase</fullName>
        <ecNumber evidence="1">2.8.1.-</ecNumber>
    </recommendedName>
    <alternativeName>
        <fullName evidence="1">Two-thiocytidine biosynthesis protein A</fullName>
    </alternativeName>
    <alternativeName>
        <fullName evidence="1">tRNA 2-thiocytidine biosynthesis protein TtcA</fullName>
    </alternativeName>
</protein>
<evidence type="ECO:0000255" key="1">
    <source>
        <dbReference type="HAMAP-Rule" id="MF_01850"/>
    </source>
</evidence>
<dbReference type="EC" id="2.8.1.-" evidence="1"/>
<dbReference type="EMBL" id="CP000083">
    <property type="protein sequence ID" value="AAZ25342.1"/>
    <property type="molecule type" value="Genomic_DNA"/>
</dbReference>
<dbReference type="RefSeq" id="WP_011043763.1">
    <property type="nucleotide sequence ID" value="NC_003910.7"/>
</dbReference>
<dbReference type="SMR" id="Q47ZU5"/>
<dbReference type="STRING" id="167879.CPS_2974"/>
<dbReference type="KEGG" id="cps:CPS_2974"/>
<dbReference type="eggNOG" id="COG0037">
    <property type="taxonomic scope" value="Bacteria"/>
</dbReference>
<dbReference type="HOGENOM" id="CLU_026481_0_0_6"/>
<dbReference type="Proteomes" id="UP000000547">
    <property type="component" value="Chromosome"/>
</dbReference>
<dbReference type="GO" id="GO:0005737">
    <property type="term" value="C:cytoplasm"/>
    <property type="evidence" value="ECO:0007669"/>
    <property type="project" value="UniProtKB-SubCell"/>
</dbReference>
<dbReference type="GO" id="GO:0051539">
    <property type="term" value="F:4 iron, 4 sulfur cluster binding"/>
    <property type="evidence" value="ECO:0007669"/>
    <property type="project" value="UniProtKB-UniRule"/>
</dbReference>
<dbReference type="GO" id="GO:0005524">
    <property type="term" value="F:ATP binding"/>
    <property type="evidence" value="ECO:0007669"/>
    <property type="project" value="UniProtKB-UniRule"/>
</dbReference>
<dbReference type="GO" id="GO:0000287">
    <property type="term" value="F:magnesium ion binding"/>
    <property type="evidence" value="ECO:0007669"/>
    <property type="project" value="UniProtKB-UniRule"/>
</dbReference>
<dbReference type="GO" id="GO:0016783">
    <property type="term" value="F:sulfurtransferase activity"/>
    <property type="evidence" value="ECO:0007669"/>
    <property type="project" value="UniProtKB-UniRule"/>
</dbReference>
<dbReference type="GO" id="GO:0000049">
    <property type="term" value="F:tRNA binding"/>
    <property type="evidence" value="ECO:0007669"/>
    <property type="project" value="UniProtKB-KW"/>
</dbReference>
<dbReference type="GO" id="GO:0034227">
    <property type="term" value="P:tRNA thio-modification"/>
    <property type="evidence" value="ECO:0007669"/>
    <property type="project" value="UniProtKB-UniRule"/>
</dbReference>
<dbReference type="CDD" id="cd24138">
    <property type="entry name" value="TtcA-like"/>
    <property type="match status" value="1"/>
</dbReference>
<dbReference type="Gene3D" id="3.40.50.620">
    <property type="entry name" value="HUPs"/>
    <property type="match status" value="1"/>
</dbReference>
<dbReference type="HAMAP" id="MF_01850">
    <property type="entry name" value="TtcA"/>
    <property type="match status" value="1"/>
</dbReference>
<dbReference type="InterPro" id="IPR014729">
    <property type="entry name" value="Rossmann-like_a/b/a_fold"/>
</dbReference>
<dbReference type="InterPro" id="IPR011063">
    <property type="entry name" value="TilS/TtcA_N"/>
</dbReference>
<dbReference type="InterPro" id="IPR012089">
    <property type="entry name" value="tRNA_Cyd_32_2_STrfase"/>
</dbReference>
<dbReference type="InterPro" id="IPR035107">
    <property type="entry name" value="tRNA_thiolation_TtcA_Ctu1"/>
</dbReference>
<dbReference type="NCBIfam" id="NF007972">
    <property type="entry name" value="PRK10696.1"/>
    <property type="match status" value="1"/>
</dbReference>
<dbReference type="PANTHER" id="PTHR43686:SF1">
    <property type="entry name" value="AMINOTRAN_5 DOMAIN-CONTAINING PROTEIN"/>
    <property type="match status" value="1"/>
</dbReference>
<dbReference type="PANTHER" id="PTHR43686">
    <property type="entry name" value="SULFURTRANSFERASE-RELATED"/>
    <property type="match status" value="1"/>
</dbReference>
<dbReference type="Pfam" id="PF01171">
    <property type="entry name" value="ATP_bind_3"/>
    <property type="match status" value="1"/>
</dbReference>
<dbReference type="PIRSF" id="PIRSF004976">
    <property type="entry name" value="ATPase_YdaO"/>
    <property type="match status" value="1"/>
</dbReference>
<dbReference type="SUPFAM" id="SSF52402">
    <property type="entry name" value="Adenine nucleotide alpha hydrolases-like"/>
    <property type="match status" value="1"/>
</dbReference>
<comment type="function">
    <text evidence="1">Catalyzes the ATP-dependent 2-thiolation of cytidine in position 32 of tRNA, to form 2-thiocytidine (s(2)C32). The sulfur atoms are provided by the cysteine/cysteine desulfurase (IscS) system.</text>
</comment>
<comment type="catalytic activity">
    <reaction evidence="1">
        <text>cytidine(32) in tRNA + S-sulfanyl-L-cysteinyl-[cysteine desulfurase] + AH2 + ATP = 2-thiocytidine(32) in tRNA + L-cysteinyl-[cysteine desulfurase] + A + AMP + diphosphate + H(+)</text>
        <dbReference type="Rhea" id="RHEA:57048"/>
        <dbReference type="Rhea" id="RHEA-COMP:10288"/>
        <dbReference type="Rhea" id="RHEA-COMP:12157"/>
        <dbReference type="Rhea" id="RHEA-COMP:12158"/>
        <dbReference type="Rhea" id="RHEA-COMP:14821"/>
        <dbReference type="ChEBI" id="CHEBI:13193"/>
        <dbReference type="ChEBI" id="CHEBI:15378"/>
        <dbReference type="ChEBI" id="CHEBI:17499"/>
        <dbReference type="ChEBI" id="CHEBI:29950"/>
        <dbReference type="ChEBI" id="CHEBI:30616"/>
        <dbReference type="ChEBI" id="CHEBI:33019"/>
        <dbReference type="ChEBI" id="CHEBI:61963"/>
        <dbReference type="ChEBI" id="CHEBI:82748"/>
        <dbReference type="ChEBI" id="CHEBI:141453"/>
        <dbReference type="ChEBI" id="CHEBI:456215"/>
    </reaction>
    <physiologicalReaction direction="left-to-right" evidence="1">
        <dbReference type="Rhea" id="RHEA:57049"/>
    </physiologicalReaction>
</comment>
<comment type="cofactor">
    <cofactor evidence="1">
        <name>Mg(2+)</name>
        <dbReference type="ChEBI" id="CHEBI:18420"/>
    </cofactor>
</comment>
<comment type="cofactor">
    <cofactor evidence="1">
        <name>[4Fe-4S] cluster</name>
        <dbReference type="ChEBI" id="CHEBI:49883"/>
    </cofactor>
    <text evidence="1">Binds 1 [4Fe-4S] cluster per subunit. The cluster is chelated by three Cys residues, the fourth Fe has a free coordination site that may bind a sulfur atom transferred from the persulfide of IscS.</text>
</comment>
<comment type="pathway">
    <text evidence="1">tRNA modification.</text>
</comment>
<comment type="subunit">
    <text evidence="1">Homodimer.</text>
</comment>
<comment type="subcellular location">
    <subcellularLocation>
        <location evidence="1">Cytoplasm</location>
    </subcellularLocation>
</comment>
<comment type="miscellaneous">
    <text evidence="1">The thiolation reaction likely consists of two steps: a first activation step by ATP to form an adenylated intermediate of the target base of tRNA, and a second nucleophilic substitution step of the sulfur (S) atom supplied by the hydrosulfide attached to the Fe-S cluster.</text>
</comment>
<comment type="similarity">
    <text evidence="1">Belongs to the TtcA family.</text>
</comment>
<sequence length="314" mass="35300">MTEAQLTLPTTKLSPTQKTQFIKLEKKLRRNVGQAIAQYNMIEDGDKVMVCLSGGKDSYAMLSILMLLKESAPIHFDIIAVNLDQKQPGFPEHILPEYLDKLGIEYHIVEEDTYGIVKEKVPEGKTTCSLCSRLRRAVLYKAAKKIGATKIALGHHRDDMIETLMLNMFYGGKMKAMPAKLVSDNGEHVVIRPLAFCKESELIQYSELKHFPIIPCNLCGSQPNMQRQNIKRMLNDWHDQFPGRIESMFTAMQNVVPSHLCDSNLFDFKSINSTSGIINGGDTAFDEVAIEAPQDLSMKNQPNADQLLNVVEVK</sequence>
<reference key="1">
    <citation type="journal article" date="2005" name="Proc. Natl. Acad. Sci. U.S.A.">
        <title>The psychrophilic lifestyle as revealed by the genome sequence of Colwellia psychrerythraea 34H through genomic and proteomic analyses.</title>
        <authorList>
            <person name="Methe B.A."/>
            <person name="Nelson K.E."/>
            <person name="Deming J.W."/>
            <person name="Momen B."/>
            <person name="Melamud E."/>
            <person name="Zhang X."/>
            <person name="Moult J."/>
            <person name="Madupu R."/>
            <person name="Nelson W.C."/>
            <person name="Dodson R.J."/>
            <person name="Brinkac L.M."/>
            <person name="Daugherty S.C."/>
            <person name="Durkin A.S."/>
            <person name="DeBoy R.T."/>
            <person name="Kolonay J.F."/>
            <person name="Sullivan S.A."/>
            <person name="Zhou L."/>
            <person name="Davidsen T.M."/>
            <person name="Wu M."/>
            <person name="Huston A.L."/>
            <person name="Lewis M."/>
            <person name="Weaver B."/>
            <person name="Weidman J.F."/>
            <person name="Khouri H."/>
            <person name="Utterback T.R."/>
            <person name="Feldblyum T.V."/>
            <person name="Fraser C.M."/>
        </authorList>
    </citation>
    <scope>NUCLEOTIDE SEQUENCE [LARGE SCALE GENOMIC DNA]</scope>
    <source>
        <strain>34H / ATCC BAA-681</strain>
    </source>
</reference>